<proteinExistence type="inferred from homology"/>
<protein>
    <recommendedName>
        <fullName evidence="6">FAD-linked oxidoreductase chry5</fullName>
        <ecNumber evidence="8">1.-.-.-</ecNumber>
    </recommendedName>
    <alternativeName>
        <fullName evidence="6">Chrysogine biosynthesis cluster protein 5</fullName>
    </alternativeName>
</protein>
<name>CHRY5_GIBZE</name>
<keyword id="KW-0274">FAD</keyword>
<keyword id="KW-0285">Flavoprotein</keyword>
<keyword id="KW-0325">Glycoprotein</keyword>
<keyword id="KW-0560">Oxidoreductase</keyword>
<keyword id="KW-1185">Reference proteome</keyword>
<keyword id="KW-0732">Signal</keyword>
<reference key="1">
    <citation type="journal article" date="2007" name="Science">
        <title>The Fusarium graminearum genome reveals a link between localized polymorphism and pathogen specialization.</title>
        <authorList>
            <person name="Cuomo C.A."/>
            <person name="Gueldener U."/>
            <person name="Xu J.-R."/>
            <person name="Trail F."/>
            <person name="Turgeon B.G."/>
            <person name="Di Pietro A."/>
            <person name="Walton J.D."/>
            <person name="Ma L.-J."/>
            <person name="Baker S.E."/>
            <person name="Rep M."/>
            <person name="Adam G."/>
            <person name="Antoniw J."/>
            <person name="Baldwin T."/>
            <person name="Calvo S.E."/>
            <person name="Chang Y.-L."/>
            <person name="DeCaprio D."/>
            <person name="Gale L.R."/>
            <person name="Gnerre S."/>
            <person name="Goswami R.S."/>
            <person name="Hammond-Kosack K."/>
            <person name="Harris L.J."/>
            <person name="Hilburn K."/>
            <person name="Kennell J.C."/>
            <person name="Kroken S."/>
            <person name="Magnuson J.K."/>
            <person name="Mannhaupt G."/>
            <person name="Mauceli E.W."/>
            <person name="Mewes H.-W."/>
            <person name="Mitterbauer R."/>
            <person name="Muehlbauer G."/>
            <person name="Muensterkoetter M."/>
            <person name="Nelson D."/>
            <person name="O'Donnell K."/>
            <person name="Ouellet T."/>
            <person name="Qi W."/>
            <person name="Quesneville H."/>
            <person name="Roncero M.I.G."/>
            <person name="Seong K.-Y."/>
            <person name="Tetko I.V."/>
            <person name="Urban M."/>
            <person name="Waalwijk C."/>
            <person name="Ward T.J."/>
            <person name="Yao J."/>
            <person name="Birren B.W."/>
            <person name="Kistler H.C."/>
        </authorList>
    </citation>
    <scope>NUCLEOTIDE SEQUENCE [LARGE SCALE GENOMIC DNA]</scope>
    <source>
        <strain>ATCC MYA-4620 / CBS 123657 / FGSC 9075 / NRRL 31084 / PH-1</strain>
    </source>
</reference>
<reference key="2">
    <citation type="journal article" date="2010" name="Nature">
        <title>Comparative genomics reveals mobile pathogenicity chromosomes in Fusarium.</title>
        <authorList>
            <person name="Ma L.-J."/>
            <person name="van der Does H.C."/>
            <person name="Borkovich K.A."/>
            <person name="Coleman J.J."/>
            <person name="Daboussi M.-J."/>
            <person name="Di Pietro A."/>
            <person name="Dufresne M."/>
            <person name="Freitag M."/>
            <person name="Grabherr M."/>
            <person name="Henrissat B."/>
            <person name="Houterman P.M."/>
            <person name="Kang S."/>
            <person name="Shim W.-B."/>
            <person name="Woloshuk C."/>
            <person name="Xie X."/>
            <person name="Xu J.-R."/>
            <person name="Antoniw J."/>
            <person name="Baker S.E."/>
            <person name="Bluhm B.H."/>
            <person name="Breakspear A."/>
            <person name="Brown D.W."/>
            <person name="Butchko R.A.E."/>
            <person name="Chapman S."/>
            <person name="Coulson R."/>
            <person name="Coutinho P.M."/>
            <person name="Danchin E.G.J."/>
            <person name="Diener A."/>
            <person name="Gale L.R."/>
            <person name="Gardiner D.M."/>
            <person name="Goff S."/>
            <person name="Hammond-Kosack K.E."/>
            <person name="Hilburn K."/>
            <person name="Hua-Van A."/>
            <person name="Jonkers W."/>
            <person name="Kazan K."/>
            <person name="Kodira C.D."/>
            <person name="Koehrsen M."/>
            <person name="Kumar L."/>
            <person name="Lee Y.-H."/>
            <person name="Li L."/>
            <person name="Manners J.M."/>
            <person name="Miranda-Saavedra D."/>
            <person name="Mukherjee M."/>
            <person name="Park G."/>
            <person name="Park J."/>
            <person name="Park S.-Y."/>
            <person name="Proctor R.H."/>
            <person name="Regev A."/>
            <person name="Ruiz-Roldan M.C."/>
            <person name="Sain D."/>
            <person name="Sakthikumar S."/>
            <person name="Sykes S."/>
            <person name="Schwartz D.C."/>
            <person name="Turgeon B.G."/>
            <person name="Wapinski I."/>
            <person name="Yoder O."/>
            <person name="Young S."/>
            <person name="Zeng Q."/>
            <person name="Zhou S."/>
            <person name="Galagan J."/>
            <person name="Cuomo C.A."/>
            <person name="Kistler H.C."/>
            <person name="Rep M."/>
        </authorList>
    </citation>
    <scope>GENOME REANNOTATION</scope>
    <source>
        <strain>ATCC MYA-4620 / CBS 123657 / FGSC 9075 / NRRL 31084 / PH-1</strain>
    </source>
</reference>
<reference key="3">
    <citation type="journal article" date="2015" name="BMC Genomics">
        <title>The completed genome sequence of the pathogenic ascomycete fungus Fusarium graminearum.</title>
        <authorList>
            <person name="King R."/>
            <person name="Urban M."/>
            <person name="Hammond-Kosack M.C.U."/>
            <person name="Hassani-Pak K."/>
            <person name="Hammond-Kosack K.E."/>
        </authorList>
    </citation>
    <scope>NUCLEOTIDE SEQUENCE [LARGE SCALE GENOMIC DNA]</scope>
    <source>
        <strain>ATCC MYA-4620 / CBS 123657 / FGSC 9075 / NRRL 31084 / PH-1</strain>
    </source>
</reference>
<reference key="4">
    <citation type="journal article" date="2017" name="J. Nat. Prod.">
        <title>Chrysogine biosynthesis is mediated by a two-module nonribosomal peptide synthetase.</title>
        <authorList>
            <person name="Wollenberg R.D."/>
            <person name="Saei W."/>
            <person name="Westphal K.R."/>
            <person name="Klitgaard C.S."/>
            <person name="Nielsen K.L."/>
            <person name="Lysoee E."/>
            <person name="Gardiner D.M."/>
            <person name="Wimmer R."/>
            <person name="Sondergaard T.E."/>
            <person name="Soerensen J.L."/>
        </authorList>
    </citation>
    <scope>FUNCTION</scope>
    <scope>PATHWAY</scope>
</reference>
<feature type="signal peptide" evidence="2">
    <location>
        <begin position="1"/>
        <end position="17"/>
    </location>
</feature>
<feature type="chain" id="PRO_5010124794" description="FAD-linked oxidoreductase chry5">
    <location>
        <begin position="18"/>
        <end position="506"/>
    </location>
</feature>
<feature type="domain" description="FAD-binding PCMH-type" evidence="4">
    <location>
        <begin position="59"/>
        <end position="241"/>
    </location>
</feature>
<feature type="glycosylation site" description="N-linked (GlcNAc...) asparagine" evidence="3">
    <location>
        <position position="205"/>
    </location>
</feature>
<feature type="glycosylation site" description="N-linked (GlcNAc...) asparagine" evidence="3">
    <location>
        <position position="272"/>
    </location>
</feature>
<feature type="glycosylation site" description="N-linked (GlcNAc...) asparagine" evidence="3">
    <location>
        <position position="281"/>
    </location>
</feature>
<feature type="glycosylation site" description="N-linked (GlcNAc...) asparagine" evidence="3">
    <location>
        <position position="389"/>
    </location>
</feature>
<feature type="glycosylation site" description="N-linked (GlcNAc...) asparagine" evidence="3">
    <location>
        <position position="431"/>
    </location>
</feature>
<evidence type="ECO:0000250" key="1">
    <source>
        <dbReference type="UniProtKB" id="Q5BEJ5"/>
    </source>
</evidence>
<evidence type="ECO:0000255" key="2"/>
<evidence type="ECO:0000255" key="3">
    <source>
        <dbReference type="PROSITE-ProRule" id="PRU00498"/>
    </source>
</evidence>
<evidence type="ECO:0000255" key="4">
    <source>
        <dbReference type="PROSITE-ProRule" id="PRU00718"/>
    </source>
</evidence>
<evidence type="ECO:0000269" key="5">
    <source>
    </source>
</evidence>
<evidence type="ECO:0000303" key="6">
    <source>
    </source>
</evidence>
<evidence type="ECO:0000305" key="7"/>
<evidence type="ECO:0000305" key="8">
    <source>
    </source>
</evidence>
<dbReference type="EC" id="1.-.-.-" evidence="8"/>
<dbReference type="EMBL" id="HG970334">
    <property type="protein sequence ID" value="CEF88821.1"/>
    <property type="molecule type" value="Genomic_DNA"/>
</dbReference>
<dbReference type="RefSeq" id="XP_011325834.1">
    <property type="nucleotide sequence ID" value="XM_011327532.1"/>
</dbReference>
<dbReference type="SMR" id="I1S3L1"/>
<dbReference type="STRING" id="229533.I1S3L1"/>
<dbReference type="GlyCosmos" id="I1S3L1">
    <property type="glycosylation" value="5 sites, No reported glycans"/>
</dbReference>
<dbReference type="KEGG" id="fgr:FGSG_11399"/>
<dbReference type="VEuPathDB" id="FungiDB:FGRAMPH1_01G21967"/>
<dbReference type="eggNOG" id="ENOG502SJ3M">
    <property type="taxonomic scope" value="Eukaryota"/>
</dbReference>
<dbReference type="HOGENOM" id="CLU_018354_0_1_1"/>
<dbReference type="InParanoid" id="I1S3L1"/>
<dbReference type="OrthoDB" id="43961at110618"/>
<dbReference type="Proteomes" id="UP000070720">
    <property type="component" value="Chromosome 3"/>
</dbReference>
<dbReference type="GO" id="GO:0071949">
    <property type="term" value="F:FAD binding"/>
    <property type="evidence" value="ECO:0007669"/>
    <property type="project" value="InterPro"/>
</dbReference>
<dbReference type="GO" id="GO:0016491">
    <property type="term" value="F:oxidoreductase activity"/>
    <property type="evidence" value="ECO:0007669"/>
    <property type="project" value="UniProtKB-KW"/>
</dbReference>
<dbReference type="Gene3D" id="3.30.465.10">
    <property type="match status" value="1"/>
</dbReference>
<dbReference type="Gene3D" id="3.40.462.20">
    <property type="match status" value="1"/>
</dbReference>
<dbReference type="InterPro" id="IPR012951">
    <property type="entry name" value="BBE"/>
</dbReference>
<dbReference type="InterPro" id="IPR016166">
    <property type="entry name" value="FAD-bd_PCMH"/>
</dbReference>
<dbReference type="InterPro" id="IPR036318">
    <property type="entry name" value="FAD-bd_PCMH-like_sf"/>
</dbReference>
<dbReference type="InterPro" id="IPR016169">
    <property type="entry name" value="FAD-bd_PCMH_sub2"/>
</dbReference>
<dbReference type="InterPro" id="IPR050416">
    <property type="entry name" value="FAD-linked_Oxidoreductase"/>
</dbReference>
<dbReference type="InterPro" id="IPR006094">
    <property type="entry name" value="Oxid_FAD_bind_N"/>
</dbReference>
<dbReference type="PANTHER" id="PTHR42973">
    <property type="entry name" value="BINDING OXIDOREDUCTASE, PUTATIVE (AFU_ORTHOLOGUE AFUA_1G17690)-RELATED"/>
    <property type="match status" value="1"/>
</dbReference>
<dbReference type="PANTHER" id="PTHR42973:SF9">
    <property type="entry name" value="FAD-BINDING PCMH-TYPE DOMAIN-CONTAINING PROTEIN-RELATED"/>
    <property type="match status" value="1"/>
</dbReference>
<dbReference type="Pfam" id="PF08031">
    <property type="entry name" value="BBE"/>
    <property type="match status" value="1"/>
</dbReference>
<dbReference type="Pfam" id="PF01565">
    <property type="entry name" value="FAD_binding_4"/>
    <property type="match status" value="1"/>
</dbReference>
<dbReference type="SUPFAM" id="SSF56176">
    <property type="entry name" value="FAD-binding/transporter-associated domain-like"/>
    <property type="match status" value="1"/>
</dbReference>
<dbReference type="PROSITE" id="PS51387">
    <property type="entry name" value="FAD_PCMH"/>
    <property type="match status" value="1"/>
</dbReference>
<gene>
    <name evidence="6" type="primary">chry5</name>
    <name type="ORF">FG11399</name>
    <name type="ORF">FGRAMPH1_01T21967</name>
</gene>
<accession>I1S3L1</accession>
<accession>A0A098E3Z7</accession>
<comment type="function">
    <text evidence="5 8">FAD-linked oxidoreductase; part of the gene cluster that mediates the biosynthesis of the yellow pigment chrysogine (PubMed:28708398). Pyruvic acid and anthranilic acid are likely substrates for the nonribosomal peptide synthetase chry1/NRPS14, with pyruvic acid adenylated by the first A domain and anthranilic acid by the second (Probable). If pyruvic acid and anthranilic acid are merged and released from chry1/NRPS14 by hydrolysis, a subsequent amidation would lead to 2-pyruvoylaminobenzamide (Probable). This process is probably catalyzed by the amidotransferase chry2 using glutamine as amino donor (Probable). The dehydrogenase chry5 that has a terminal berberine bridge domain for C-N cyclization could catalyze the cyclization of 2-pyruvoylaminobenzamide to yield acetyl-4(3H)-quinazolidinone (Probable). A final reduction of acetyl-4(3H)-quinazolidinone catalyzed by the oxidoreductase chry4 would result in chrysogine (Probable).</text>
</comment>
<comment type="cofactor">
    <cofactor evidence="1">
        <name>FAD</name>
        <dbReference type="ChEBI" id="CHEBI:57692"/>
    </cofactor>
</comment>
<comment type="pathway">
    <text evidence="8">Pigment biosynthesis.</text>
</comment>
<comment type="similarity">
    <text evidence="7">Belongs to the oxygen-dependent FAD-linked oxidoreductase family.</text>
</comment>
<sequence length="506" mass="55373">MHLQALTGLATLAVTAASQTLWSRDVDYKALSKELSASAKVYFPGTEDFDAASKRWSNLDKPTVNIVAVPATENDVVEITLDLTQANTLRQVKFANKKNLPFLAQNSAHGAITTLGQMKQGIEIYLNQLSGVKIAKDGKSVTILGGTASKKVTMGLWEAGKQTVTGCCECVGYVGPALGGGHGWLQGRHGLIADQFESMNIVLANGTLATVDENSELWWALKGAGHNFGIVTSVTSKTYDAKIKNWAFASLTFKGEKVEELYETINKYILKNGTQPTDLINWSYWFNIPDLDPTGPIVQILLMQEGVDVVDKAYTGPFQELKPLAVDAKKGVYTDLAKWVGVTTEDGPCQKNGAMNPRFPIYLQDYNPAAQKKAFNYFADNIRGDSIFNGSLVTFDGYSTEGVKAIDSKSTAFAYRNQNILVGPLLSYQSNGTATDEKASEIGHKVRDILHEGTGRDTVPVYVNYAFGDEGPKEWYGSEAWRQSRLQELKEAYDPKGMFSFYAPIA</sequence>
<organism>
    <name type="scientific">Gibberella zeae (strain ATCC MYA-4620 / CBS 123657 / FGSC 9075 / NRRL 31084 / PH-1)</name>
    <name type="common">Wheat head blight fungus</name>
    <name type="synonym">Fusarium graminearum</name>
    <dbReference type="NCBI Taxonomy" id="229533"/>
    <lineage>
        <taxon>Eukaryota</taxon>
        <taxon>Fungi</taxon>
        <taxon>Dikarya</taxon>
        <taxon>Ascomycota</taxon>
        <taxon>Pezizomycotina</taxon>
        <taxon>Sordariomycetes</taxon>
        <taxon>Hypocreomycetidae</taxon>
        <taxon>Hypocreales</taxon>
        <taxon>Nectriaceae</taxon>
        <taxon>Fusarium</taxon>
    </lineage>
</organism>